<evidence type="ECO:0000255" key="1">
    <source>
        <dbReference type="HAMAP-Rule" id="MF_00146"/>
    </source>
</evidence>
<dbReference type="EC" id="3.5.4.13" evidence="1"/>
<dbReference type="EMBL" id="CP001364">
    <property type="protein sequence ID" value="ACM52503.1"/>
    <property type="molecule type" value="Genomic_DNA"/>
</dbReference>
<dbReference type="SMR" id="B9LAF7"/>
<dbReference type="KEGG" id="chl:Chy400_1081"/>
<dbReference type="HOGENOM" id="CLU_087476_4_0_0"/>
<dbReference type="OrthoDB" id="9780202at2"/>
<dbReference type="UniPathway" id="UPA00610">
    <property type="reaction ID" value="UER00665"/>
</dbReference>
<dbReference type="GO" id="GO:0008829">
    <property type="term" value="F:dCTP deaminase activity"/>
    <property type="evidence" value="ECO:0007669"/>
    <property type="project" value="UniProtKB-UniRule"/>
</dbReference>
<dbReference type="GO" id="GO:0000166">
    <property type="term" value="F:nucleotide binding"/>
    <property type="evidence" value="ECO:0007669"/>
    <property type="project" value="UniProtKB-KW"/>
</dbReference>
<dbReference type="GO" id="GO:0006226">
    <property type="term" value="P:dUMP biosynthetic process"/>
    <property type="evidence" value="ECO:0007669"/>
    <property type="project" value="UniProtKB-UniPathway"/>
</dbReference>
<dbReference type="GO" id="GO:0006229">
    <property type="term" value="P:dUTP biosynthetic process"/>
    <property type="evidence" value="ECO:0007669"/>
    <property type="project" value="UniProtKB-UniRule"/>
</dbReference>
<dbReference type="GO" id="GO:0015949">
    <property type="term" value="P:nucleobase-containing small molecule interconversion"/>
    <property type="evidence" value="ECO:0007669"/>
    <property type="project" value="TreeGrafter"/>
</dbReference>
<dbReference type="CDD" id="cd07557">
    <property type="entry name" value="trimeric_dUTPase"/>
    <property type="match status" value="1"/>
</dbReference>
<dbReference type="FunFam" id="2.70.40.10:FF:000001">
    <property type="entry name" value="dCTP deaminase"/>
    <property type="match status" value="1"/>
</dbReference>
<dbReference type="Gene3D" id="2.70.40.10">
    <property type="match status" value="1"/>
</dbReference>
<dbReference type="HAMAP" id="MF_00146">
    <property type="entry name" value="dCTP_deaminase"/>
    <property type="match status" value="1"/>
</dbReference>
<dbReference type="InterPro" id="IPR011962">
    <property type="entry name" value="dCTP_deaminase"/>
</dbReference>
<dbReference type="InterPro" id="IPR036157">
    <property type="entry name" value="dUTPase-like_sf"/>
</dbReference>
<dbReference type="InterPro" id="IPR033704">
    <property type="entry name" value="dUTPase_trimeric"/>
</dbReference>
<dbReference type="NCBIfam" id="TIGR02274">
    <property type="entry name" value="dCTP_deam"/>
    <property type="match status" value="1"/>
</dbReference>
<dbReference type="PANTHER" id="PTHR42680">
    <property type="entry name" value="DCTP DEAMINASE"/>
    <property type="match status" value="1"/>
</dbReference>
<dbReference type="PANTHER" id="PTHR42680:SF3">
    <property type="entry name" value="DCTP DEAMINASE"/>
    <property type="match status" value="1"/>
</dbReference>
<dbReference type="Pfam" id="PF22769">
    <property type="entry name" value="DCD"/>
    <property type="match status" value="1"/>
</dbReference>
<dbReference type="SUPFAM" id="SSF51283">
    <property type="entry name" value="dUTPase-like"/>
    <property type="match status" value="1"/>
</dbReference>
<name>DCD_CHLSY</name>
<feature type="chain" id="PRO_1000123141" description="dCTP deaminase">
    <location>
        <begin position="1"/>
        <end position="186"/>
    </location>
</feature>
<feature type="active site" description="Proton donor/acceptor" evidence="1">
    <location>
        <position position="133"/>
    </location>
</feature>
<feature type="binding site" evidence="1">
    <location>
        <begin position="107"/>
        <end position="112"/>
    </location>
    <ligand>
        <name>dCTP</name>
        <dbReference type="ChEBI" id="CHEBI:61481"/>
    </ligand>
</feature>
<feature type="binding site" evidence="1">
    <location>
        <position position="152"/>
    </location>
    <ligand>
        <name>dCTP</name>
        <dbReference type="ChEBI" id="CHEBI:61481"/>
    </ligand>
</feature>
<feature type="binding site" evidence="1">
    <location>
        <position position="166"/>
    </location>
    <ligand>
        <name>dCTP</name>
        <dbReference type="ChEBI" id="CHEBI:61481"/>
    </ligand>
</feature>
<feature type="binding site" evidence="1">
    <location>
        <position position="176"/>
    </location>
    <ligand>
        <name>dCTP</name>
        <dbReference type="ChEBI" id="CHEBI:61481"/>
    </ligand>
</feature>
<sequence length="186" mass="21181">MPIKSDRWIRRMALEHGMIEPFVDHQVRRGVISYGLTSYGYDMRVTDHFKVFTNVYNALVDPKQFDPRSFVDIRADYVDIPPNSFALAQSLEYFRIPRTVSCIVIGKSSYARCGIIINVTPLEPEWEGHVTIEISNTTPLPARIYAHEGIGQVLFLESDEPCEVSYADKKGKYQGQTGIVLPRIDP</sequence>
<proteinExistence type="inferred from homology"/>
<reference key="1">
    <citation type="submission" date="2009-01" db="EMBL/GenBank/DDBJ databases">
        <title>Complete sequence of Chloroflexus sp. Y-400-fl.</title>
        <authorList>
            <consortium name="US DOE Joint Genome Institute"/>
            <person name="Lucas S."/>
            <person name="Copeland A."/>
            <person name="Lapidus A."/>
            <person name="Glavina del Rio T."/>
            <person name="Dalin E."/>
            <person name="Tice H."/>
            <person name="Bruce D."/>
            <person name="Goodwin L."/>
            <person name="Pitluck S."/>
            <person name="Sims D."/>
            <person name="Kiss H."/>
            <person name="Brettin T."/>
            <person name="Detter J.C."/>
            <person name="Han C."/>
            <person name="Larimer F."/>
            <person name="Land M."/>
            <person name="Hauser L."/>
            <person name="Kyrpides N."/>
            <person name="Ovchinnikova G."/>
            <person name="Bryant D.A."/>
            <person name="Richardson P."/>
        </authorList>
    </citation>
    <scope>NUCLEOTIDE SEQUENCE [LARGE SCALE GENOMIC DNA]</scope>
    <source>
        <strain>ATCC 29364 / DSM 637 / Y-400-fl</strain>
    </source>
</reference>
<comment type="function">
    <text evidence="1">Catalyzes the deamination of dCTP to dUTP.</text>
</comment>
<comment type="catalytic activity">
    <reaction evidence="1">
        <text>dCTP + H2O + H(+) = dUTP + NH4(+)</text>
        <dbReference type="Rhea" id="RHEA:22680"/>
        <dbReference type="ChEBI" id="CHEBI:15377"/>
        <dbReference type="ChEBI" id="CHEBI:15378"/>
        <dbReference type="ChEBI" id="CHEBI:28938"/>
        <dbReference type="ChEBI" id="CHEBI:61481"/>
        <dbReference type="ChEBI" id="CHEBI:61555"/>
        <dbReference type="EC" id="3.5.4.13"/>
    </reaction>
</comment>
<comment type="pathway">
    <text evidence="1">Pyrimidine metabolism; dUMP biosynthesis; dUMP from dCTP (dUTP route): step 1/2.</text>
</comment>
<comment type="subunit">
    <text evidence="1">Homotrimer.</text>
</comment>
<comment type="similarity">
    <text evidence="1">Belongs to the dCTP deaminase family.</text>
</comment>
<organism>
    <name type="scientific">Chloroflexus aurantiacus (strain ATCC 29364 / DSM 637 / Y-400-fl)</name>
    <dbReference type="NCBI Taxonomy" id="480224"/>
    <lineage>
        <taxon>Bacteria</taxon>
        <taxon>Bacillati</taxon>
        <taxon>Chloroflexota</taxon>
        <taxon>Chloroflexia</taxon>
        <taxon>Chloroflexales</taxon>
        <taxon>Chloroflexineae</taxon>
        <taxon>Chloroflexaceae</taxon>
        <taxon>Chloroflexus</taxon>
    </lineage>
</organism>
<protein>
    <recommendedName>
        <fullName evidence="1">dCTP deaminase</fullName>
        <ecNumber evidence="1">3.5.4.13</ecNumber>
    </recommendedName>
    <alternativeName>
        <fullName evidence="1">Deoxycytidine triphosphate deaminase</fullName>
    </alternativeName>
</protein>
<keyword id="KW-0378">Hydrolase</keyword>
<keyword id="KW-0546">Nucleotide metabolism</keyword>
<keyword id="KW-0547">Nucleotide-binding</keyword>
<gene>
    <name evidence="1" type="primary">dcd</name>
    <name type="ordered locus">Chy400_1081</name>
</gene>
<accession>B9LAF7</accession>